<comment type="function">
    <text evidence="2">Binds to actin filaments and promotes cross-linking into thick bundles. Has an actin-stabilizing activity. The actin regulatory activities are not regulated by pH and [Ca(2+)].</text>
</comment>
<comment type="subunit">
    <text evidence="2">Interacts with F-actin.</text>
</comment>
<comment type="subcellular location">
    <subcellularLocation>
        <location evidence="2">Cytoplasm</location>
        <location evidence="2">Cytoskeleton</location>
    </subcellularLocation>
</comment>
<comment type="alternative products">
    <event type="alternative splicing"/>
    <isoform>
        <id>Q9M047-1</id>
        <name>1</name>
        <sequence type="displayed"/>
    </isoform>
    <isoform>
        <id>Q9M047-2</id>
        <name>2</name>
        <sequence type="described" ref="VSP_056810"/>
    </isoform>
</comment>
<comment type="tissue specificity">
    <text evidence="2">Expressed in roots, leaves, stems, flowers and siliques. Barely detected in pollen.</text>
</comment>
<comment type="miscellaneous">
    <text evidence="2">Cross-links actin with a constant of dissociation of 0.5 uM.</text>
</comment>
<feature type="chain" id="PRO_0000430594" description="LIM domain-containing protein WLIM2b">
    <location>
        <begin position="1"/>
        <end position="199"/>
    </location>
</feature>
<feature type="domain" description="LIM zinc-binding 1" evidence="1">
    <location>
        <begin position="8"/>
        <end position="68"/>
    </location>
</feature>
<feature type="domain" description="LIM zinc-binding 2" evidence="1">
    <location>
        <begin position="106"/>
        <end position="166"/>
    </location>
</feature>
<feature type="splice variant" id="VSP_056810" description="In isoform 2." evidence="4">
    <original>K</original>
    <variation>KIHNPLSYRELARKPNVLHRCIDPGDIGSCYFNLH</variation>
    <location>
        <position position="120"/>
    </location>
</feature>
<feature type="sequence conflict" description="In Ref. 4; BAH20111." ref="4">
    <original>E</original>
    <variation>G</variation>
    <location>
        <position position="14"/>
    </location>
</feature>
<gene>
    <name evidence="3" type="primary">WLIM2B</name>
    <name evidence="5" type="ordered locus">At3g55770</name>
    <name evidence="6" type="ORF">F1I16.180</name>
</gene>
<protein>
    <recommendedName>
        <fullName evidence="4">LIM domain-containing protein WLIM2b</fullName>
    </recommendedName>
    <alternativeName>
        <fullName evidence="4">Widely-expressed LIM protein 2B</fullName>
    </alternativeName>
</protein>
<keyword id="KW-0009">Actin-binding</keyword>
<keyword id="KW-0025">Alternative splicing</keyword>
<keyword id="KW-0963">Cytoplasm</keyword>
<keyword id="KW-0206">Cytoskeleton</keyword>
<keyword id="KW-0440">LIM domain</keyword>
<keyword id="KW-0479">Metal-binding</keyword>
<keyword id="KW-1185">Reference proteome</keyword>
<keyword id="KW-0677">Repeat</keyword>
<keyword id="KW-0862">Zinc</keyword>
<sequence>MSFTGTQQKCKACEKTVYAVELLSADGVGYHKSCFKCTHCKSRLQLSSYSSMEGVLYCKPHFEQLFKESGSFNKNFQSPAKSADKSTPELTRTPSRVAGRFSGTQEKCATCSKTVYPIEKVTVESQTYHKSCFKCSHGGCPISPSNYAALEGILYCKHHFAQLFKEKGSYNHLIKSASIKRSAAAAVAAGVPAASVPES</sequence>
<accession>Q9M047</accession>
<accession>B9DH94</accession>
<accession>F4IY27</accession>
<organism>
    <name type="scientific">Arabidopsis thaliana</name>
    <name type="common">Mouse-ear cress</name>
    <dbReference type="NCBI Taxonomy" id="3702"/>
    <lineage>
        <taxon>Eukaryota</taxon>
        <taxon>Viridiplantae</taxon>
        <taxon>Streptophyta</taxon>
        <taxon>Embryophyta</taxon>
        <taxon>Tracheophyta</taxon>
        <taxon>Spermatophyta</taxon>
        <taxon>Magnoliopsida</taxon>
        <taxon>eudicotyledons</taxon>
        <taxon>Gunneridae</taxon>
        <taxon>Pentapetalae</taxon>
        <taxon>rosids</taxon>
        <taxon>malvids</taxon>
        <taxon>Brassicales</taxon>
        <taxon>Brassicaceae</taxon>
        <taxon>Camelineae</taxon>
        <taxon>Arabidopsis</taxon>
    </lineage>
</organism>
<proteinExistence type="evidence at protein level"/>
<name>WLI2B_ARATH</name>
<evidence type="ECO:0000255" key="1">
    <source>
        <dbReference type="PROSITE-ProRule" id="PRU00125"/>
    </source>
</evidence>
<evidence type="ECO:0000269" key="2">
    <source>
    </source>
</evidence>
<evidence type="ECO:0000303" key="3">
    <source>
    </source>
</evidence>
<evidence type="ECO:0000305" key="4"/>
<evidence type="ECO:0000312" key="5">
    <source>
        <dbReference type="Araport" id="AT3G55770"/>
    </source>
</evidence>
<evidence type="ECO:0000312" key="6">
    <source>
        <dbReference type="EMBL" id="CAB81602.1"/>
    </source>
</evidence>
<dbReference type="EMBL" id="AL161667">
    <property type="protein sequence ID" value="CAB81602.1"/>
    <property type="molecule type" value="Genomic_DNA"/>
</dbReference>
<dbReference type="EMBL" id="CP002686">
    <property type="protein sequence ID" value="AEE79434.1"/>
    <property type="molecule type" value="Genomic_DNA"/>
</dbReference>
<dbReference type="EMBL" id="CP002686">
    <property type="protein sequence ID" value="AEE79435.1"/>
    <property type="molecule type" value="Genomic_DNA"/>
</dbReference>
<dbReference type="EMBL" id="CP002686">
    <property type="protein sequence ID" value="AEE79436.1"/>
    <property type="molecule type" value="Genomic_DNA"/>
</dbReference>
<dbReference type="EMBL" id="CP002686">
    <property type="protein sequence ID" value="AEE79438.1"/>
    <property type="molecule type" value="Genomic_DNA"/>
</dbReference>
<dbReference type="EMBL" id="CP002686">
    <property type="protein sequence ID" value="AEE79440.1"/>
    <property type="molecule type" value="Genomic_DNA"/>
</dbReference>
<dbReference type="EMBL" id="AY063924">
    <property type="protein sequence ID" value="AAL36280.1"/>
    <property type="molecule type" value="mRNA"/>
</dbReference>
<dbReference type="EMBL" id="AY091249">
    <property type="protein sequence ID" value="AAM14188.1"/>
    <property type="molecule type" value="mRNA"/>
</dbReference>
<dbReference type="EMBL" id="AK317129">
    <property type="protein sequence ID" value="BAH19816.1"/>
    <property type="molecule type" value="mRNA"/>
</dbReference>
<dbReference type="EMBL" id="AK317349">
    <property type="protein sequence ID" value="BAH20021.1"/>
    <property type="molecule type" value="mRNA"/>
</dbReference>
<dbReference type="EMBL" id="AK317444">
    <property type="protein sequence ID" value="BAH20111.1"/>
    <property type="molecule type" value="mRNA"/>
</dbReference>
<dbReference type="EMBL" id="AY084361">
    <property type="protein sequence ID" value="AAM60942.1"/>
    <property type="molecule type" value="mRNA"/>
</dbReference>
<dbReference type="PIR" id="T47716">
    <property type="entry name" value="T47716"/>
</dbReference>
<dbReference type="RefSeq" id="NP_001030868.1">
    <molecule id="Q9M047-1"/>
    <property type="nucleotide sequence ID" value="NM_001035791.1"/>
</dbReference>
<dbReference type="RefSeq" id="NP_001030870.1">
    <molecule id="Q9M047-1"/>
    <property type="nucleotide sequence ID" value="NM_001035793.2"/>
</dbReference>
<dbReference type="RefSeq" id="NP_001190099.1">
    <molecule id="Q9M047-2"/>
    <property type="nucleotide sequence ID" value="NM_001203170.1"/>
</dbReference>
<dbReference type="RefSeq" id="NP_191136.1">
    <molecule id="Q9M047-1"/>
    <property type="nucleotide sequence ID" value="NM_115435.6"/>
</dbReference>
<dbReference type="RefSeq" id="NP_680133.2">
    <molecule id="Q9M047-1"/>
    <property type="nucleotide sequence ID" value="NM_148878.2"/>
</dbReference>
<dbReference type="BioGRID" id="10059">
    <property type="interactions" value="6"/>
</dbReference>
<dbReference type="FunCoup" id="Q9M047">
    <property type="interactions" value="1416"/>
</dbReference>
<dbReference type="IntAct" id="Q9M047">
    <property type="interactions" value="4"/>
</dbReference>
<dbReference type="STRING" id="3702.Q9M047"/>
<dbReference type="iPTMnet" id="Q9M047"/>
<dbReference type="ProteomicsDB" id="242768">
    <molecule id="Q9M047-1"/>
</dbReference>
<dbReference type="EnsemblPlants" id="AT3G55770.1">
    <molecule id="Q9M047-1"/>
    <property type="protein sequence ID" value="AT3G55770.1"/>
    <property type="gene ID" value="AT3G55770"/>
</dbReference>
<dbReference type="EnsemblPlants" id="AT3G55770.2">
    <molecule id="Q9M047-1"/>
    <property type="protein sequence ID" value="AT3G55770.2"/>
    <property type="gene ID" value="AT3G55770"/>
</dbReference>
<dbReference type="EnsemblPlants" id="AT3G55770.3">
    <molecule id="Q9M047-1"/>
    <property type="protein sequence ID" value="AT3G55770.3"/>
    <property type="gene ID" value="AT3G55770"/>
</dbReference>
<dbReference type="EnsemblPlants" id="AT3G55770.5">
    <molecule id="Q9M047-1"/>
    <property type="protein sequence ID" value="AT3G55770.5"/>
    <property type="gene ID" value="AT3G55770"/>
</dbReference>
<dbReference type="EnsemblPlants" id="AT3G55770.7">
    <molecule id="Q9M047-2"/>
    <property type="protein sequence ID" value="AT3G55770.7"/>
    <property type="gene ID" value="AT3G55770"/>
</dbReference>
<dbReference type="GeneID" id="824743"/>
<dbReference type="Gramene" id="AT3G55770.1">
    <molecule id="Q9M047-1"/>
    <property type="protein sequence ID" value="AT3G55770.1"/>
    <property type="gene ID" value="AT3G55770"/>
</dbReference>
<dbReference type="Gramene" id="AT3G55770.2">
    <molecule id="Q9M047-1"/>
    <property type="protein sequence ID" value="AT3G55770.2"/>
    <property type="gene ID" value="AT3G55770"/>
</dbReference>
<dbReference type="Gramene" id="AT3G55770.3">
    <molecule id="Q9M047-1"/>
    <property type="protein sequence ID" value="AT3G55770.3"/>
    <property type="gene ID" value="AT3G55770"/>
</dbReference>
<dbReference type="Gramene" id="AT3G55770.5">
    <molecule id="Q9M047-1"/>
    <property type="protein sequence ID" value="AT3G55770.5"/>
    <property type="gene ID" value="AT3G55770"/>
</dbReference>
<dbReference type="Gramene" id="AT3G55770.7">
    <molecule id="Q9M047-2"/>
    <property type="protein sequence ID" value="AT3G55770.7"/>
    <property type="gene ID" value="AT3G55770"/>
</dbReference>
<dbReference type="KEGG" id="ath:AT3G55770"/>
<dbReference type="Araport" id="AT3G55770"/>
<dbReference type="TAIR" id="AT3G55770">
    <property type="gene designation" value="WLIM2B"/>
</dbReference>
<dbReference type="InParanoid" id="Q9M047"/>
<dbReference type="OMA" id="CKTDYDR"/>
<dbReference type="OrthoDB" id="6129702at2759"/>
<dbReference type="PhylomeDB" id="Q9M047"/>
<dbReference type="PRO" id="PR:Q9M047"/>
<dbReference type="Proteomes" id="UP000006548">
    <property type="component" value="Chromosome 3"/>
</dbReference>
<dbReference type="ExpressionAtlas" id="Q9M047">
    <property type="expression patterns" value="baseline and differential"/>
</dbReference>
<dbReference type="GO" id="GO:0005737">
    <property type="term" value="C:cytoplasm"/>
    <property type="evidence" value="ECO:0007669"/>
    <property type="project" value="UniProtKB-KW"/>
</dbReference>
<dbReference type="GO" id="GO:0005856">
    <property type="term" value="C:cytoskeleton"/>
    <property type="evidence" value="ECO:0007669"/>
    <property type="project" value="UniProtKB-SubCell"/>
</dbReference>
<dbReference type="GO" id="GO:0051015">
    <property type="term" value="F:actin filament binding"/>
    <property type="evidence" value="ECO:0000314"/>
    <property type="project" value="TAIR"/>
</dbReference>
<dbReference type="GO" id="GO:0046872">
    <property type="term" value="F:metal ion binding"/>
    <property type="evidence" value="ECO:0007669"/>
    <property type="project" value="UniProtKB-KW"/>
</dbReference>
<dbReference type="GO" id="GO:0003729">
    <property type="term" value="F:mRNA binding"/>
    <property type="evidence" value="ECO:0007005"/>
    <property type="project" value="TAIR"/>
</dbReference>
<dbReference type="GO" id="GO:0051017">
    <property type="term" value="P:actin filament bundle assembly"/>
    <property type="evidence" value="ECO:0000314"/>
    <property type="project" value="TAIR"/>
</dbReference>
<dbReference type="CDD" id="cd09440">
    <property type="entry name" value="LIM1_SF3"/>
    <property type="match status" value="1"/>
</dbReference>
<dbReference type="CDD" id="cd09441">
    <property type="entry name" value="LIM2_SF3"/>
    <property type="match status" value="1"/>
</dbReference>
<dbReference type="FunFam" id="2.10.110.10:FF:000002">
    <property type="entry name" value="LIM domain and actin-binding 1"/>
    <property type="match status" value="2"/>
</dbReference>
<dbReference type="Gene3D" id="2.10.110.10">
    <property type="entry name" value="Cysteine Rich Protein"/>
    <property type="match status" value="2"/>
</dbReference>
<dbReference type="InterPro" id="IPR001781">
    <property type="entry name" value="Znf_LIM"/>
</dbReference>
<dbReference type="PANTHER" id="PTHR24206">
    <property type="entry name" value="OS06G0237300 PROTEIN"/>
    <property type="match status" value="1"/>
</dbReference>
<dbReference type="Pfam" id="PF00412">
    <property type="entry name" value="LIM"/>
    <property type="match status" value="2"/>
</dbReference>
<dbReference type="SMART" id="SM00132">
    <property type="entry name" value="LIM"/>
    <property type="match status" value="2"/>
</dbReference>
<dbReference type="SUPFAM" id="SSF57716">
    <property type="entry name" value="Glucocorticoid receptor-like (DNA-binding domain)"/>
    <property type="match status" value="4"/>
</dbReference>
<dbReference type="PROSITE" id="PS00478">
    <property type="entry name" value="LIM_DOMAIN_1"/>
    <property type="match status" value="1"/>
</dbReference>
<dbReference type="PROSITE" id="PS50023">
    <property type="entry name" value="LIM_DOMAIN_2"/>
    <property type="match status" value="2"/>
</dbReference>
<reference key="1">
    <citation type="journal article" date="2000" name="Nature">
        <title>Sequence and analysis of chromosome 3 of the plant Arabidopsis thaliana.</title>
        <authorList>
            <person name="Salanoubat M."/>
            <person name="Lemcke K."/>
            <person name="Rieger M."/>
            <person name="Ansorge W."/>
            <person name="Unseld M."/>
            <person name="Fartmann B."/>
            <person name="Valle G."/>
            <person name="Bloecker H."/>
            <person name="Perez-Alonso M."/>
            <person name="Obermaier B."/>
            <person name="Delseny M."/>
            <person name="Boutry M."/>
            <person name="Grivell L.A."/>
            <person name="Mache R."/>
            <person name="Puigdomenech P."/>
            <person name="De Simone V."/>
            <person name="Choisne N."/>
            <person name="Artiguenave F."/>
            <person name="Robert C."/>
            <person name="Brottier P."/>
            <person name="Wincker P."/>
            <person name="Cattolico L."/>
            <person name="Weissenbach J."/>
            <person name="Saurin W."/>
            <person name="Quetier F."/>
            <person name="Schaefer M."/>
            <person name="Mueller-Auer S."/>
            <person name="Gabel C."/>
            <person name="Fuchs M."/>
            <person name="Benes V."/>
            <person name="Wurmbach E."/>
            <person name="Drzonek H."/>
            <person name="Erfle H."/>
            <person name="Jordan N."/>
            <person name="Bangert S."/>
            <person name="Wiedelmann R."/>
            <person name="Kranz H."/>
            <person name="Voss H."/>
            <person name="Holland R."/>
            <person name="Brandt P."/>
            <person name="Nyakatura G."/>
            <person name="Vezzi A."/>
            <person name="D'Angelo M."/>
            <person name="Pallavicini A."/>
            <person name="Toppo S."/>
            <person name="Simionati B."/>
            <person name="Conrad A."/>
            <person name="Hornischer K."/>
            <person name="Kauer G."/>
            <person name="Loehnert T.-H."/>
            <person name="Nordsiek G."/>
            <person name="Reichelt J."/>
            <person name="Scharfe M."/>
            <person name="Schoen O."/>
            <person name="Bargues M."/>
            <person name="Terol J."/>
            <person name="Climent J."/>
            <person name="Navarro P."/>
            <person name="Collado C."/>
            <person name="Perez-Perez A."/>
            <person name="Ottenwaelder B."/>
            <person name="Duchemin D."/>
            <person name="Cooke R."/>
            <person name="Laudie M."/>
            <person name="Berger-Llauro C."/>
            <person name="Purnelle B."/>
            <person name="Masuy D."/>
            <person name="de Haan M."/>
            <person name="Maarse A.C."/>
            <person name="Alcaraz J.-P."/>
            <person name="Cottet A."/>
            <person name="Casacuberta E."/>
            <person name="Monfort A."/>
            <person name="Argiriou A."/>
            <person name="Flores M."/>
            <person name="Liguori R."/>
            <person name="Vitale D."/>
            <person name="Mannhaupt G."/>
            <person name="Haase D."/>
            <person name="Schoof H."/>
            <person name="Rudd S."/>
            <person name="Zaccaria P."/>
            <person name="Mewes H.-W."/>
            <person name="Mayer K.F.X."/>
            <person name="Kaul S."/>
            <person name="Town C.D."/>
            <person name="Koo H.L."/>
            <person name="Tallon L.J."/>
            <person name="Jenkins J."/>
            <person name="Rooney T."/>
            <person name="Rizzo M."/>
            <person name="Walts A."/>
            <person name="Utterback T."/>
            <person name="Fujii C.Y."/>
            <person name="Shea T.P."/>
            <person name="Creasy T.H."/>
            <person name="Haas B."/>
            <person name="Maiti R."/>
            <person name="Wu D."/>
            <person name="Peterson J."/>
            <person name="Van Aken S."/>
            <person name="Pai G."/>
            <person name="Militscher J."/>
            <person name="Sellers P."/>
            <person name="Gill J.E."/>
            <person name="Feldblyum T.V."/>
            <person name="Preuss D."/>
            <person name="Lin X."/>
            <person name="Nierman W.C."/>
            <person name="Salzberg S.L."/>
            <person name="White O."/>
            <person name="Venter J.C."/>
            <person name="Fraser C.M."/>
            <person name="Kaneko T."/>
            <person name="Nakamura Y."/>
            <person name="Sato S."/>
            <person name="Kato T."/>
            <person name="Asamizu E."/>
            <person name="Sasamoto S."/>
            <person name="Kimura T."/>
            <person name="Idesawa K."/>
            <person name="Kawashima K."/>
            <person name="Kishida Y."/>
            <person name="Kiyokawa C."/>
            <person name="Kohara M."/>
            <person name="Matsumoto M."/>
            <person name="Matsuno A."/>
            <person name="Muraki A."/>
            <person name="Nakayama S."/>
            <person name="Nakazaki N."/>
            <person name="Shinpo S."/>
            <person name="Takeuchi C."/>
            <person name="Wada T."/>
            <person name="Watanabe A."/>
            <person name="Yamada M."/>
            <person name="Yasuda M."/>
            <person name="Tabata S."/>
        </authorList>
    </citation>
    <scope>NUCLEOTIDE SEQUENCE [LARGE SCALE GENOMIC DNA]</scope>
    <source>
        <strain>cv. Columbia</strain>
    </source>
</reference>
<reference key="2">
    <citation type="journal article" date="2017" name="Plant J.">
        <title>Araport11: a complete reannotation of the Arabidopsis thaliana reference genome.</title>
        <authorList>
            <person name="Cheng C.Y."/>
            <person name="Krishnakumar V."/>
            <person name="Chan A.P."/>
            <person name="Thibaud-Nissen F."/>
            <person name="Schobel S."/>
            <person name="Town C.D."/>
        </authorList>
    </citation>
    <scope>GENOME REANNOTATION</scope>
    <source>
        <strain>cv. Columbia</strain>
    </source>
</reference>
<reference key="3">
    <citation type="journal article" date="2003" name="Science">
        <title>Empirical analysis of transcriptional activity in the Arabidopsis genome.</title>
        <authorList>
            <person name="Yamada K."/>
            <person name="Lim J."/>
            <person name="Dale J.M."/>
            <person name="Chen H."/>
            <person name="Shinn P."/>
            <person name="Palm C.J."/>
            <person name="Southwick A.M."/>
            <person name="Wu H.C."/>
            <person name="Kim C.J."/>
            <person name="Nguyen M."/>
            <person name="Pham P.K."/>
            <person name="Cheuk R.F."/>
            <person name="Karlin-Newmann G."/>
            <person name="Liu S.X."/>
            <person name="Lam B."/>
            <person name="Sakano H."/>
            <person name="Wu T."/>
            <person name="Yu G."/>
            <person name="Miranda M."/>
            <person name="Quach H.L."/>
            <person name="Tripp M."/>
            <person name="Chang C.H."/>
            <person name="Lee J.M."/>
            <person name="Toriumi M.J."/>
            <person name="Chan M.M."/>
            <person name="Tang C.C."/>
            <person name="Onodera C.S."/>
            <person name="Deng J.M."/>
            <person name="Akiyama K."/>
            <person name="Ansari Y."/>
            <person name="Arakawa T."/>
            <person name="Banh J."/>
            <person name="Banno F."/>
            <person name="Bowser L."/>
            <person name="Brooks S.Y."/>
            <person name="Carninci P."/>
            <person name="Chao Q."/>
            <person name="Choy N."/>
            <person name="Enju A."/>
            <person name="Goldsmith A.D."/>
            <person name="Gurjal M."/>
            <person name="Hansen N.F."/>
            <person name="Hayashizaki Y."/>
            <person name="Johnson-Hopson C."/>
            <person name="Hsuan V.W."/>
            <person name="Iida K."/>
            <person name="Karnes M."/>
            <person name="Khan S."/>
            <person name="Koesema E."/>
            <person name="Ishida J."/>
            <person name="Jiang P.X."/>
            <person name="Jones T."/>
            <person name="Kawai J."/>
            <person name="Kamiya A."/>
            <person name="Meyers C."/>
            <person name="Nakajima M."/>
            <person name="Narusaka M."/>
            <person name="Seki M."/>
            <person name="Sakurai T."/>
            <person name="Satou M."/>
            <person name="Tamse R."/>
            <person name="Vaysberg M."/>
            <person name="Wallender E.K."/>
            <person name="Wong C."/>
            <person name="Yamamura Y."/>
            <person name="Yuan S."/>
            <person name="Shinozaki K."/>
            <person name="Davis R.W."/>
            <person name="Theologis A."/>
            <person name="Ecker J.R."/>
        </authorList>
    </citation>
    <scope>NUCLEOTIDE SEQUENCE [LARGE SCALE MRNA] (ISOFORM 1)</scope>
    <source>
        <strain>cv. Columbia</strain>
    </source>
</reference>
<reference key="4">
    <citation type="journal article" date="2009" name="DNA Res.">
        <title>Analysis of multiple occurrences of alternative splicing events in Arabidopsis thaliana using novel sequenced full-length cDNAs.</title>
        <authorList>
            <person name="Iida K."/>
            <person name="Fukami-Kobayashi K."/>
            <person name="Toyoda A."/>
            <person name="Sakaki Y."/>
            <person name="Kobayashi M."/>
            <person name="Seki M."/>
            <person name="Shinozaki K."/>
        </authorList>
    </citation>
    <scope>NUCLEOTIDE SEQUENCE [LARGE SCALE MRNA] (ISOFORM 1)</scope>
    <source>
        <strain>cv. Columbia</strain>
    </source>
</reference>
<reference key="5">
    <citation type="submission" date="2002-03" db="EMBL/GenBank/DDBJ databases">
        <title>Full-length cDNA from Arabidopsis thaliana.</title>
        <authorList>
            <person name="Brover V.V."/>
            <person name="Troukhan M.E."/>
            <person name="Alexandrov N.A."/>
            <person name="Lu Y.-P."/>
            <person name="Flavell R.B."/>
            <person name="Feldmann K.A."/>
        </authorList>
    </citation>
    <scope>NUCLEOTIDE SEQUENCE [LARGE SCALE MRNA] (ISOFORM 1)</scope>
</reference>
<reference key="6">
    <citation type="journal article" date="2007" name="DNA Res.">
        <title>Genome-wide analysis of LIM gene family in Populus trichocarpa, Arabidopsis thaliana, and Oryza sativa.</title>
        <authorList>
            <person name="Arnaud D."/>
            <person name="Dejardin A."/>
            <person name="Leple J.C."/>
            <person name="Lesage-Descauses M.C."/>
            <person name="Pilate G."/>
        </authorList>
    </citation>
    <scope>GENE FAMILY</scope>
    <scope>NOMENCLATURE</scope>
</reference>
<reference key="7">
    <citation type="journal article" date="2010" name="Plant Cell">
        <title>Arabidopsis LIM proteins: a family of actin bundlers with distinct expression patterns and modes of regulation.</title>
        <authorList>
            <person name="Papuga J."/>
            <person name="Hoffmann C."/>
            <person name="Dieterle M."/>
            <person name="Moes D."/>
            <person name="Moreau F."/>
            <person name="Tholl S."/>
            <person name="Steinmetz A."/>
            <person name="Thomas C."/>
        </authorList>
    </citation>
    <scope>FUNCTION</scope>
    <scope>TISSUE SPECIFICITY</scope>
    <scope>SUBCELLULAR LOCATION</scope>
    <scope>INTERACTION WITH F-ACTIN</scope>
</reference>